<accession>Q4J8Q7</accession>
<gene>
    <name evidence="5" type="ordered locus">Saci_1499</name>
</gene>
<proteinExistence type="inferred from homology"/>
<evidence type="ECO:0000255" key="1"/>
<evidence type="ECO:0000269" key="2">
    <source>
    </source>
</evidence>
<evidence type="ECO:0000305" key="3"/>
<evidence type="ECO:0000305" key="4">
    <source>
    </source>
</evidence>
<evidence type="ECO:0000312" key="5">
    <source>
        <dbReference type="EMBL" id="AAY80820.1"/>
    </source>
</evidence>
<dbReference type="EC" id="2.4.-.-"/>
<dbReference type="EMBL" id="CP000077">
    <property type="protein sequence ID" value="AAY80820.1"/>
    <property type="molecule type" value="Genomic_DNA"/>
</dbReference>
<dbReference type="RefSeq" id="WP_011278322.1">
    <property type="nucleotide sequence ID" value="NC_007181.1"/>
</dbReference>
<dbReference type="STRING" id="330779.Saci_1499"/>
<dbReference type="CAZy" id="GT2">
    <property type="family name" value="Glycosyltransferase Family 2"/>
</dbReference>
<dbReference type="GeneID" id="14551997"/>
<dbReference type="KEGG" id="sai:Saci_1499"/>
<dbReference type="PATRIC" id="fig|330779.12.peg.1445"/>
<dbReference type="eggNOG" id="arCOG01391">
    <property type="taxonomic scope" value="Archaea"/>
</dbReference>
<dbReference type="HOGENOM" id="CLU_041759_1_0_2"/>
<dbReference type="Proteomes" id="UP000001018">
    <property type="component" value="Chromosome"/>
</dbReference>
<dbReference type="GO" id="GO:0016020">
    <property type="term" value="C:membrane"/>
    <property type="evidence" value="ECO:0007669"/>
    <property type="project" value="UniProtKB-SubCell"/>
</dbReference>
<dbReference type="GO" id="GO:0016757">
    <property type="term" value="F:glycosyltransferase activity"/>
    <property type="evidence" value="ECO:0007669"/>
    <property type="project" value="UniProtKB-KW"/>
</dbReference>
<dbReference type="GO" id="GO:0009058">
    <property type="term" value="P:biosynthetic process"/>
    <property type="evidence" value="ECO:0007669"/>
    <property type="project" value="UniProtKB-ARBA"/>
</dbReference>
<dbReference type="CDD" id="cd06423">
    <property type="entry name" value="CESA_like"/>
    <property type="match status" value="1"/>
</dbReference>
<dbReference type="Gene3D" id="3.90.550.10">
    <property type="entry name" value="Spore Coat Polysaccharide Biosynthesis Protein SpsA, Chain A"/>
    <property type="match status" value="1"/>
</dbReference>
<dbReference type="InterPro" id="IPR001173">
    <property type="entry name" value="Glyco_trans_2-like"/>
</dbReference>
<dbReference type="InterPro" id="IPR050321">
    <property type="entry name" value="Glycosyltr_2/OpgH_subfam"/>
</dbReference>
<dbReference type="InterPro" id="IPR029044">
    <property type="entry name" value="Nucleotide-diphossugar_trans"/>
</dbReference>
<dbReference type="PANTHER" id="PTHR43867">
    <property type="entry name" value="CELLULOSE SYNTHASE CATALYTIC SUBUNIT A [UDP-FORMING]"/>
    <property type="match status" value="1"/>
</dbReference>
<dbReference type="PANTHER" id="PTHR43867:SF2">
    <property type="entry name" value="CELLULOSE SYNTHASE CATALYTIC SUBUNIT A [UDP-FORMING]"/>
    <property type="match status" value="1"/>
</dbReference>
<dbReference type="Pfam" id="PF00535">
    <property type="entry name" value="Glycos_transf_2"/>
    <property type="match status" value="1"/>
</dbReference>
<dbReference type="SUPFAM" id="SSF53448">
    <property type="entry name" value="Nucleotide-diphospho-sugar transferases"/>
    <property type="match status" value="1"/>
</dbReference>
<feature type="chain" id="PRO_0000462451" description="Probable glycosyltransferase Saci_1499">
    <location>
        <begin position="1"/>
        <end position="464"/>
    </location>
</feature>
<feature type="transmembrane region" description="Helical" evidence="1">
    <location>
        <begin position="6"/>
        <end position="26"/>
    </location>
</feature>
<feature type="transmembrane region" description="Helical" evidence="1">
    <location>
        <begin position="300"/>
        <end position="320"/>
    </location>
</feature>
<feature type="transmembrane region" description="Helical" evidence="1">
    <location>
        <begin position="337"/>
        <end position="357"/>
    </location>
</feature>
<feature type="transmembrane region" description="Helical" evidence="1">
    <location>
        <begin position="373"/>
        <end position="393"/>
    </location>
</feature>
<feature type="transmembrane region" description="Helical" evidence="1">
    <location>
        <begin position="416"/>
        <end position="436"/>
    </location>
</feature>
<feature type="transmembrane region" description="Helical" evidence="1">
    <location>
        <begin position="439"/>
        <end position="459"/>
    </location>
</feature>
<keyword id="KW-1003">Cell membrane</keyword>
<keyword id="KW-0227">DNA damage</keyword>
<keyword id="KW-0328">Glycosyltransferase</keyword>
<keyword id="KW-0472">Membrane</keyword>
<keyword id="KW-1185">Reference proteome</keyword>
<keyword id="KW-0808">Transferase</keyword>
<keyword id="KW-0812">Transmembrane</keyword>
<keyword id="KW-1133">Transmembrane helix</keyword>
<name>Y1499_SULAC</name>
<organism>
    <name type="scientific">Sulfolobus acidocaldarius (strain ATCC 33909 / DSM 639 / JCM 8929 / NBRC 15157 / NCIMB 11770)</name>
    <dbReference type="NCBI Taxonomy" id="330779"/>
    <lineage>
        <taxon>Archaea</taxon>
        <taxon>Thermoproteota</taxon>
        <taxon>Thermoprotei</taxon>
        <taxon>Sulfolobales</taxon>
        <taxon>Sulfolobaceae</taxon>
        <taxon>Sulfolobus</taxon>
    </lineage>
</organism>
<comment type="function">
    <text evidence="4">Probably part of a 4-gene DNA damage response locus in which the upstream ups system, in combination with this downstream locus, functions in homologous recombination to rescue Sulfolobales from DNA-damaging threats.</text>
</comment>
<comment type="subcellular location">
    <subcellularLocation>
        <location evidence="3">Cell membrane</location>
        <topology evidence="1">Multi-pass membrane protein</topology>
    </subcellularLocation>
</comment>
<comment type="disruption phenotype">
    <text evidence="2">Essential, it cannot be deleted.</text>
</comment>
<comment type="similarity">
    <text evidence="3">Belongs to the glycosyltransferase 2 family.</text>
</comment>
<protein>
    <recommendedName>
        <fullName evidence="3">Probable glycosyltransferase Saci_1499</fullName>
        <ecNumber>2.4.-.-</ecNumber>
    </recommendedName>
</protein>
<reference evidence="5" key="1">
    <citation type="journal article" date="2005" name="J. Bacteriol.">
        <title>The genome of Sulfolobus acidocaldarius, a model organism of the Crenarchaeota.</title>
        <authorList>
            <person name="Chen L."/>
            <person name="Bruegger K."/>
            <person name="Skovgaard M."/>
            <person name="Redder P."/>
            <person name="She Q."/>
            <person name="Torarinsson E."/>
            <person name="Greve B."/>
            <person name="Awayez M."/>
            <person name="Zibat A."/>
            <person name="Klenk H.-P."/>
            <person name="Garrett R.A."/>
        </authorList>
    </citation>
    <scope>NUCLEOTIDE SEQUENCE [LARGE SCALE GENOMIC DNA]</scope>
    <source>
        <strain>ATCC 33909 / DSM 639 / JCM 8929 / NBRC 15157 / NCIMB 11770</strain>
    </source>
</reference>
<reference key="2">
    <citation type="journal article" date="2015" name="J. Bacteriol.">
        <title>DNA Processing Proteins Involved in the UV-Induced Stress Response of Sulfolobales.</title>
        <authorList>
            <person name="van Wolferen M."/>
            <person name="Ma X."/>
            <person name="Albers S.V."/>
        </authorList>
    </citation>
    <scope>DISRUPTION PHENOTYPE</scope>
    <source>
        <strain>ATCC 33909 / DSM 639 / JCM 8929 / NBRC 15157 / NCIMB 11770</strain>
    </source>
</reference>
<sequence length="464" mass="52942">MGLTDIFLNLLLFVYPAVFIIYQIILYEISARKQINQEALKYSNLPVLSIIVPIKNEEISVIQGLLDNLSNLIWDKKKLEIIIVSDDNEDYFTKIINTVKVPKDLTVYFYRREKKLGYKSGALQYGFEKATGDLILTIDVDSRLPPNALINAYEKMQSNTCDAIVFQWNGYSSNQYSTLAKGMVVSTLFASKALFEGKEKLKLKIYPVGSGTMFSREALRVVNGWDYRLVQDDLEIGTRLIYNGKNVCASGIPIYVEVPDNFYSFYVQQTRWAMGSAEVLRNRLKYIIKSKISFTQRMDLIIYLLQYTPVIVTFFISTLLSLMLPFRIGHDPLNSPALLFWLVSLGLYASLLLSLALKLGLNLKDSLMGIGRLTAFTVSISPFIVFNFFKGLLKSGNTYVITPKGTVKKTNKLLRIIAIIGVFGLLYLLSSILYIYEGYYVTGIWLLYYSSAYLYTMLLYYKEL</sequence>